<proteinExistence type="inferred from homology"/>
<comment type="function">
    <text evidence="1">This protein binds to the 23S rRNA, and is important in its secondary structure. It is located near the subunit interface in the base of the L7/L12 stalk, and near the tRNA binding site of the peptidyltransferase center.</text>
</comment>
<comment type="subunit">
    <text evidence="1">Part of the 50S ribosomal subunit.</text>
</comment>
<comment type="similarity">
    <text evidence="1">Belongs to the universal ribosomal protein uL6 family.</text>
</comment>
<accession>C5CQ85</accession>
<reference key="1">
    <citation type="journal article" date="2011" name="J. Bacteriol.">
        <title>Complete genome sequence of the metabolically versatile plant growth-promoting endophyte, Variovorax paradoxus S110.</title>
        <authorList>
            <person name="Han J.I."/>
            <person name="Choi H.K."/>
            <person name="Lee S.W."/>
            <person name="Orwin P.M."/>
            <person name="Kim J."/>
            <person name="Laroe S.L."/>
            <person name="Kim T.G."/>
            <person name="O'Neil J."/>
            <person name="Leadbetter J.R."/>
            <person name="Lee S.Y."/>
            <person name="Hur C.G."/>
            <person name="Spain J.C."/>
            <person name="Ovchinnikova G."/>
            <person name="Goodwin L."/>
            <person name="Han C."/>
        </authorList>
    </citation>
    <scope>NUCLEOTIDE SEQUENCE [LARGE SCALE GENOMIC DNA]</scope>
    <source>
        <strain>S110</strain>
    </source>
</reference>
<sequence>MSRVGKMPITIPAGVDVSIKEDQISVKGTGGTLNLARNPLVKVVSNDGKLNFEPANESREANAMSGTIRQLVNNMVVGVTKGFEKKLNLVGVGYKAAASNNKLNLQVGYSHPVNIDMPQGITVATATPTEIVIKGADRQRVGQIAAEIRAVRPPEPYKGKGIRYSDEKIVIKETKKK</sequence>
<feature type="chain" id="PRO_1000214941" description="Large ribosomal subunit protein uL6">
    <location>
        <begin position="1"/>
        <end position="177"/>
    </location>
</feature>
<dbReference type="EMBL" id="CP001635">
    <property type="protein sequence ID" value="ACS21657.1"/>
    <property type="molecule type" value="Genomic_DNA"/>
</dbReference>
<dbReference type="SMR" id="C5CQ85"/>
<dbReference type="STRING" id="543728.Vapar_5055"/>
<dbReference type="KEGG" id="vap:Vapar_5055"/>
<dbReference type="eggNOG" id="COG0097">
    <property type="taxonomic scope" value="Bacteria"/>
</dbReference>
<dbReference type="HOGENOM" id="CLU_065464_1_2_4"/>
<dbReference type="OrthoDB" id="9805007at2"/>
<dbReference type="GO" id="GO:0022625">
    <property type="term" value="C:cytosolic large ribosomal subunit"/>
    <property type="evidence" value="ECO:0007669"/>
    <property type="project" value="TreeGrafter"/>
</dbReference>
<dbReference type="GO" id="GO:0019843">
    <property type="term" value="F:rRNA binding"/>
    <property type="evidence" value="ECO:0007669"/>
    <property type="project" value="UniProtKB-UniRule"/>
</dbReference>
<dbReference type="GO" id="GO:0003735">
    <property type="term" value="F:structural constituent of ribosome"/>
    <property type="evidence" value="ECO:0007669"/>
    <property type="project" value="InterPro"/>
</dbReference>
<dbReference type="GO" id="GO:0002181">
    <property type="term" value="P:cytoplasmic translation"/>
    <property type="evidence" value="ECO:0007669"/>
    <property type="project" value="TreeGrafter"/>
</dbReference>
<dbReference type="FunFam" id="3.90.930.12:FF:000001">
    <property type="entry name" value="50S ribosomal protein L6"/>
    <property type="match status" value="1"/>
</dbReference>
<dbReference type="FunFam" id="3.90.930.12:FF:000002">
    <property type="entry name" value="50S ribosomal protein L6"/>
    <property type="match status" value="1"/>
</dbReference>
<dbReference type="Gene3D" id="3.90.930.12">
    <property type="entry name" value="Ribosomal protein L6, alpha-beta domain"/>
    <property type="match status" value="2"/>
</dbReference>
<dbReference type="HAMAP" id="MF_01365_B">
    <property type="entry name" value="Ribosomal_uL6_B"/>
    <property type="match status" value="1"/>
</dbReference>
<dbReference type="InterPro" id="IPR000702">
    <property type="entry name" value="Ribosomal_uL6-like"/>
</dbReference>
<dbReference type="InterPro" id="IPR036789">
    <property type="entry name" value="Ribosomal_uL6-like_a/b-dom_sf"/>
</dbReference>
<dbReference type="InterPro" id="IPR020040">
    <property type="entry name" value="Ribosomal_uL6_a/b-dom"/>
</dbReference>
<dbReference type="InterPro" id="IPR019906">
    <property type="entry name" value="Ribosomal_uL6_bac-type"/>
</dbReference>
<dbReference type="InterPro" id="IPR002358">
    <property type="entry name" value="Ribosomal_uL6_CS"/>
</dbReference>
<dbReference type="NCBIfam" id="TIGR03654">
    <property type="entry name" value="L6_bact"/>
    <property type="match status" value="1"/>
</dbReference>
<dbReference type="PANTHER" id="PTHR11655">
    <property type="entry name" value="60S/50S RIBOSOMAL PROTEIN L6/L9"/>
    <property type="match status" value="1"/>
</dbReference>
<dbReference type="PANTHER" id="PTHR11655:SF14">
    <property type="entry name" value="LARGE RIBOSOMAL SUBUNIT PROTEIN UL6M"/>
    <property type="match status" value="1"/>
</dbReference>
<dbReference type="Pfam" id="PF00347">
    <property type="entry name" value="Ribosomal_L6"/>
    <property type="match status" value="2"/>
</dbReference>
<dbReference type="PIRSF" id="PIRSF002162">
    <property type="entry name" value="Ribosomal_L6"/>
    <property type="match status" value="1"/>
</dbReference>
<dbReference type="PRINTS" id="PR00059">
    <property type="entry name" value="RIBOSOMALL6"/>
</dbReference>
<dbReference type="SUPFAM" id="SSF56053">
    <property type="entry name" value="Ribosomal protein L6"/>
    <property type="match status" value="2"/>
</dbReference>
<dbReference type="PROSITE" id="PS00525">
    <property type="entry name" value="RIBOSOMAL_L6_1"/>
    <property type="match status" value="1"/>
</dbReference>
<evidence type="ECO:0000255" key="1">
    <source>
        <dbReference type="HAMAP-Rule" id="MF_01365"/>
    </source>
</evidence>
<evidence type="ECO:0000305" key="2"/>
<organism>
    <name type="scientific">Variovorax paradoxus (strain S110)</name>
    <dbReference type="NCBI Taxonomy" id="543728"/>
    <lineage>
        <taxon>Bacteria</taxon>
        <taxon>Pseudomonadati</taxon>
        <taxon>Pseudomonadota</taxon>
        <taxon>Betaproteobacteria</taxon>
        <taxon>Burkholderiales</taxon>
        <taxon>Comamonadaceae</taxon>
        <taxon>Variovorax</taxon>
    </lineage>
</organism>
<gene>
    <name evidence="1" type="primary">rplF</name>
    <name type="ordered locus">Vapar_5055</name>
</gene>
<protein>
    <recommendedName>
        <fullName evidence="1">Large ribosomal subunit protein uL6</fullName>
    </recommendedName>
    <alternativeName>
        <fullName evidence="2">50S ribosomal protein L6</fullName>
    </alternativeName>
</protein>
<name>RL6_VARPS</name>
<keyword id="KW-0687">Ribonucleoprotein</keyword>
<keyword id="KW-0689">Ribosomal protein</keyword>
<keyword id="KW-0694">RNA-binding</keyword>
<keyword id="KW-0699">rRNA-binding</keyword>